<name>PSBL_NEPOL</name>
<comment type="function">
    <text evidence="1">One of the components of the core complex of photosystem II (PSII). PSII is a light-driven water:plastoquinone oxidoreductase that uses light energy to abstract electrons from H(2)O, generating O(2) and a proton gradient subsequently used for ATP formation. It consists of a core antenna complex that captures photons, and an electron transfer chain that converts photonic excitation into a charge separation. This subunit is found at the monomer-monomer interface and is required for correct PSII assembly and/or dimerization.</text>
</comment>
<comment type="subunit">
    <text evidence="1">PSII is composed of 1 copy each of membrane proteins PsbA, PsbB, PsbC, PsbD, PsbE, PsbF, PsbH, PsbI, PsbJ, PsbK, PsbL, PsbM, PsbT, PsbX, PsbY, PsbZ, Psb30/Ycf12, at least 3 peripheral proteins of the oxygen-evolving complex and a large number of cofactors. It forms dimeric complexes.</text>
</comment>
<comment type="subcellular location">
    <subcellularLocation>
        <location evidence="1">Plastid</location>
        <location evidence="1">Chloroplast thylakoid membrane</location>
        <topology evidence="1">Single-pass membrane protein</topology>
    </subcellularLocation>
</comment>
<comment type="similarity">
    <text evidence="1">Belongs to the PsbL family.</text>
</comment>
<geneLocation type="chloroplast"/>
<sequence>MTKPNPNKQTVELNRTSLYWGLLLIFVLAILFSSYIFN</sequence>
<protein>
    <recommendedName>
        <fullName evidence="1">Photosystem II reaction center protein L</fullName>
        <shortName evidence="1">PSII-L</shortName>
    </recommendedName>
</protein>
<accession>Q9TKY3</accession>
<dbReference type="EMBL" id="AF137379">
    <property type="protein sequence ID" value="AAD54833.1"/>
    <property type="molecule type" value="Genomic_DNA"/>
</dbReference>
<dbReference type="RefSeq" id="NP_050862.1">
    <property type="nucleotide sequence ID" value="NC_000927.1"/>
</dbReference>
<dbReference type="SMR" id="Q9TKY3"/>
<dbReference type="GeneID" id="802025"/>
<dbReference type="GO" id="GO:0009535">
    <property type="term" value="C:chloroplast thylakoid membrane"/>
    <property type="evidence" value="ECO:0007669"/>
    <property type="project" value="UniProtKB-SubCell"/>
</dbReference>
<dbReference type="GO" id="GO:0009539">
    <property type="term" value="C:photosystem II reaction center"/>
    <property type="evidence" value="ECO:0007669"/>
    <property type="project" value="InterPro"/>
</dbReference>
<dbReference type="GO" id="GO:0015979">
    <property type="term" value="P:photosynthesis"/>
    <property type="evidence" value="ECO:0007669"/>
    <property type="project" value="UniProtKB-UniRule"/>
</dbReference>
<dbReference type="HAMAP" id="MF_01317">
    <property type="entry name" value="PSII_PsbL"/>
    <property type="match status" value="1"/>
</dbReference>
<dbReference type="InterPro" id="IPR003372">
    <property type="entry name" value="PSII_PsbL"/>
</dbReference>
<dbReference type="InterPro" id="IPR037266">
    <property type="entry name" value="PSII_PsbL_sf"/>
</dbReference>
<dbReference type="NCBIfam" id="NF001972">
    <property type="entry name" value="PRK00753.1"/>
    <property type="match status" value="1"/>
</dbReference>
<dbReference type="Pfam" id="PF02419">
    <property type="entry name" value="PsbL"/>
    <property type="match status" value="1"/>
</dbReference>
<dbReference type="SUPFAM" id="SSF161017">
    <property type="entry name" value="Photosystem II reaction center protein L, PsbL"/>
    <property type="match status" value="1"/>
</dbReference>
<evidence type="ECO:0000255" key="1">
    <source>
        <dbReference type="HAMAP-Rule" id="MF_01317"/>
    </source>
</evidence>
<feature type="chain" id="PRO_0000219746" description="Photosystem II reaction center protein L">
    <location>
        <begin position="1"/>
        <end position="38"/>
    </location>
</feature>
<feature type="transmembrane region" description="Helical" evidence="1">
    <location>
        <begin position="17"/>
        <end position="37"/>
    </location>
</feature>
<keyword id="KW-0150">Chloroplast</keyword>
<keyword id="KW-0472">Membrane</keyword>
<keyword id="KW-0602">Photosynthesis</keyword>
<keyword id="KW-0604">Photosystem II</keyword>
<keyword id="KW-0934">Plastid</keyword>
<keyword id="KW-0674">Reaction center</keyword>
<keyword id="KW-0793">Thylakoid</keyword>
<keyword id="KW-0812">Transmembrane</keyword>
<keyword id="KW-1133">Transmembrane helix</keyword>
<organism>
    <name type="scientific">Nephroselmis olivacea</name>
    <name type="common">Green alga</name>
    <dbReference type="NCBI Taxonomy" id="31312"/>
    <lineage>
        <taxon>Eukaryota</taxon>
        <taxon>Viridiplantae</taxon>
        <taxon>Chlorophyta</taxon>
        <taxon>Nephroselmidophyceae</taxon>
        <taxon>Nephroselmidales</taxon>
        <taxon>Nephroselmidaceae</taxon>
        <taxon>Nephroselmis</taxon>
    </lineage>
</organism>
<gene>
    <name evidence="1" type="primary">psbL</name>
</gene>
<proteinExistence type="inferred from homology"/>
<reference key="1">
    <citation type="journal article" date="1999" name="Proc. Natl. Acad. Sci. U.S.A.">
        <title>The complete chloroplast DNA sequence of the green alga Nephroselmis olivacea: insights into the architecture of ancestral chloroplast genomes.</title>
        <authorList>
            <person name="Turmel M."/>
            <person name="Otis C."/>
            <person name="Lemieux C."/>
        </authorList>
    </citation>
    <scope>NUCLEOTIDE SEQUENCE [LARGE SCALE GENOMIC DNA]</scope>
    <source>
        <strain>NIES-484 / S-N-5-8</strain>
    </source>
</reference>